<accession>B2W0D9</accession>
<reference key="1">
    <citation type="journal article" date="2013" name="G3 (Bethesda)">
        <title>Comparative genomics of a plant-pathogenic fungus, Pyrenophora tritici-repentis, reveals transduplication and the impact of repeat elements on pathogenicity and population divergence.</title>
        <authorList>
            <person name="Manning V.A."/>
            <person name="Pandelova I."/>
            <person name="Dhillon B."/>
            <person name="Wilhelm L.J."/>
            <person name="Goodwin S.B."/>
            <person name="Berlin A.M."/>
            <person name="Figueroa M."/>
            <person name="Freitag M."/>
            <person name="Hane J.K."/>
            <person name="Henrissat B."/>
            <person name="Holman W.H."/>
            <person name="Kodira C.D."/>
            <person name="Martin J."/>
            <person name="Oliver R.P."/>
            <person name="Robbertse B."/>
            <person name="Schackwitz W."/>
            <person name="Schwartz D.C."/>
            <person name="Spatafora J.W."/>
            <person name="Turgeon B.G."/>
            <person name="Yandava C."/>
            <person name="Young S."/>
            <person name="Zhou S."/>
            <person name="Zeng Q."/>
            <person name="Grigoriev I.V."/>
            <person name="Ma L.-J."/>
            <person name="Ciuffetti L.M."/>
        </authorList>
    </citation>
    <scope>NUCLEOTIDE SEQUENCE [LARGE SCALE GENOMIC DNA]</scope>
    <source>
        <strain>Pt-1C-BFP</strain>
    </source>
</reference>
<dbReference type="EMBL" id="DS231617">
    <property type="protein sequence ID" value="EDU46762.1"/>
    <property type="molecule type" value="Genomic_DNA"/>
</dbReference>
<dbReference type="RefSeq" id="XP_001934257.1">
    <property type="nucleotide sequence ID" value="XM_001934222.1"/>
</dbReference>
<dbReference type="SMR" id="B2W0D9"/>
<dbReference type="FunCoup" id="B2W0D9">
    <property type="interactions" value="9"/>
</dbReference>
<dbReference type="STRING" id="426418.B2W0D9"/>
<dbReference type="EnsemblFungi" id="EDU46762">
    <property type="protein sequence ID" value="EDU46762"/>
    <property type="gene ID" value="PTRG_03924"/>
</dbReference>
<dbReference type="GeneID" id="6342160"/>
<dbReference type="KEGG" id="ptrr:6342160"/>
<dbReference type="eggNOG" id="ENOG502RNK4">
    <property type="taxonomic scope" value="Eukaryota"/>
</dbReference>
<dbReference type="HOGENOM" id="CLU_033658_0_0_1"/>
<dbReference type="InParanoid" id="B2W0D9"/>
<dbReference type="OMA" id="DYTPHFL"/>
<dbReference type="OrthoDB" id="5776at28556"/>
<dbReference type="Proteomes" id="UP000001471">
    <property type="component" value="Unassembled WGS sequence"/>
</dbReference>
<dbReference type="GO" id="GO:0005737">
    <property type="term" value="C:cytoplasm"/>
    <property type="evidence" value="ECO:0007669"/>
    <property type="project" value="UniProtKB-SubCell"/>
</dbReference>
<dbReference type="GO" id="GO:0031965">
    <property type="term" value="C:nuclear membrane"/>
    <property type="evidence" value="ECO:0007669"/>
    <property type="project" value="TreeGrafter"/>
</dbReference>
<dbReference type="GO" id="GO:0070628">
    <property type="term" value="F:proteasome binding"/>
    <property type="evidence" value="ECO:0007669"/>
    <property type="project" value="TreeGrafter"/>
</dbReference>
<dbReference type="GO" id="GO:0071630">
    <property type="term" value="P:nuclear protein quality control by the ubiquitin-proteasome system"/>
    <property type="evidence" value="ECO:0007669"/>
    <property type="project" value="InterPro"/>
</dbReference>
<dbReference type="GO" id="GO:0031144">
    <property type="term" value="P:proteasome localization"/>
    <property type="evidence" value="ECO:0007669"/>
    <property type="project" value="InterPro"/>
</dbReference>
<dbReference type="GO" id="GO:0015031">
    <property type="term" value="P:protein transport"/>
    <property type="evidence" value="ECO:0007669"/>
    <property type="project" value="UniProtKB-KW"/>
</dbReference>
<dbReference type="FunFam" id="1.20.58.1590:FF:000001">
    <property type="entry name" value="Tethering factor for nuclear proteasome STS1"/>
    <property type="match status" value="1"/>
</dbReference>
<dbReference type="Gene3D" id="1.20.58.1590">
    <property type="entry name" value="Tethering factor for nuclear proteasome Cut8/Sts1"/>
    <property type="match status" value="1"/>
</dbReference>
<dbReference type="InterPro" id="IPR013868">
    <property type="entry name" value="Cut8/Sts1_fam"/>
</dbReference>
<dbReference type="InterPro" id="IPR038422">
    <property type="entry name" value="Cut8/Sts1_sf"/>
</dbReference>
<dbReference type="PANTHER" id="PTHR28032">
    <property type="entry name" value="FI02826P"/>
    <property type="match status" value="1"/>
</dbReference>
<dbReference type="PANTHER" id="PTHR28032:SF1">
    <property type="entry name" value="FI02826P"/>
    <property type="match status" value="1"/>
</dbReference>
<dbReference type="Pfam" id="PF08559">
    <property type="entry name" value="Cut8"/>
    <property type="match status" value="1"/>
</dbReference>
<gene>
    <name type="primary">sts1</name>
    <name type="ORF">PTRG_03924</name>
</gene>
<evidence type="ECO:0000250" key="1"/>
<evidence type="ECO:0000256" key="2">
    <source>
        <dbReference type="SAM" id="MobiDB-lite"/>
    </source>
</evidence>
<evidence type="ECO:0000305" key="3"/>
<protein>
    <recommendedName>
        <fullName>Tethering factor for nuclear proteasome sts1</fullName>
    </recommendedName>
</protein>
<keyword id="KW-0963">Cytoplasm</keyword>
<keyword id="KW-0539">Nucleus</keyword>
<keyword id="KW-0653">Protein transport</keyword>
<keyword id="KW-1185">Reference proteome</keyword>
<keyword id="KW-0813">Transport</keyword>
<feature type="chain" id="PRO_0000409430" description="Tethering factor for nuclear proteasome sts1">
    <location>
        <begin position="1"/>
        <end position="310"/>
    </location>
</feature>
<feature type="region of interest" description="Disordered" evidence="2">
    <location>
        <begin position="1"/>
        <end position="86"/>
    </location>
</feature>
<feature type="compositionally biased region" description="Polar residues" evidence="2">
    <location>
        <begin position="14"/>
        <end position="33"/>
    </location>
</feature>
<feature type="compositionally biased region" description="Low complexity" evidence="2">
    <location>
        <begin position="52"/>
        <end position="63"/>
    </location>
</feature>
<comment type="function">
    <text evidence="1">Involved in ubiquitin-mediated protein degradation. Regulatory factor in the ubiquitin/proteasome pathway that controls the turnover of proteasome substrates. Targets proteasomes to the nucleus and facilitates the degradation of nuclear proteins (By similarity).</text>
</comment>
<comment type="subunit">
    <text evidence="1">Binds the proteasome.</text>
</comment>
<comment type="subcellular location">
    <subcellularLocation>
        <location evidence="1">Cytoplasm</location>
    </subcellularLocation>
    <subcellularLocation>
        <location evidence="1">Nucleus</location>
    </subcellularLocation>
</comment>
<comment type="similarity">
    <text evidence="3">Belongs to the cut8/STS1 family.</text>
</comment>
<name>STS1_PYRTR</name>
<sequence length="310" mass="34013">MNVQYQAFTPPHLLNNTRRSPTRNISSLSSTMSGRKRKAEDDGSAGDDDRMSASPSASPAVLPRPAPRGMKRMRTNISGRPLPLPRLLETLSPDDMRNLLQSICQRHPDISNEIVTTAPRPSIQSTLEVLAKYEASFQAAFPFGGRASSDYAYNRVRQQLDELLDSLKDFTPHFLPPNEQQPATSLTFLDGATNIIHRLPNWDTFQHNRHKQEAYEEMAKAWAMVIQEAAKKAGGIQLQYGGWDEKIAKHNEISGGKMQEAVNELRGGLGWMGAETSNSAAGAPADAMSIRQQLLSGNYGAGSPASIGAW</sequence>
<proteinExistence type="inferred from homology"/>
<organism>
    <name type="scientific">Pyrenophora tritici-repentis (strain Pt-1C-BFP)</name>
    <name type="common">Wheat tan spot fungus</name>
    <name type="synonym">Drechslera tritici-repentis</name>
    <dbReference type="NCBI Taxonomy" id="426418"/>
    <lineage>
        <taxon>Eukaryota</taxon>
        <taxon>Fungi</taxon>
        <taxon>Dikarya</taxon>
        <taxon>Ascomycota</taxon>
        <taxon>Pezizomycotina</taxon>
        <taxon>Dothideomycetes</taxon>
        <taxon>Pleosporomycetidae</taxon>
        <taxon>Pleosporales</taxon>
        <taxon>Pleosporineae</taxon>
        <taxon>Pleosporaceae</taxon>
        <taxon>Pyrenophora</taxon>
    </lineage>
</organism>